<reference key="1">
    <citation type="submission" date="2008-10" db="EMBL/GenBank/DDBJ databases">
        <title>Genome sequence of Bacillus anthracis str. CDC 684.</title>
        <authorList>
            <person name="Dodson R.J."/>
            <person name="Munk A.C."/>
            <person name="Brettin T."/>
            <person name="Bruce D."/>
            <person name="Detter C."/>
            <person name="Tapia R."/>
            <person name="Han C."/>
            <person name="Sutton G."/>
            <person name="Sims D."/>
        </authorList>
    </citation>
    <scope>NUCLEOTIDE SEQUENCE [LARGE SCALE GENOMIC DNA]</scope>
    <source>
        <strain>CDC 684 / NRRL 3495</strain>
    </source>
</reference>
<protein>
    <recommendedName>
        <fullName evidence="1">Dihydroorotase</fullName>
        <shortName evidence="1">DHOase</shortName>
        <ecNumber evidence="1">3.5.2.3</ecNumber>
    </recommendedName>
</protein>
<keyword id="KW-0378">Hydrolase</keyword>
<keyword id="KW-0479">Metal-binding</keyword>
<keyword id="KW-0665">Pyrimidine biosynthesis</keyword>
<keyword id="KW-0862">Zinc</keyword>
<organism>
    <name type="scientific">Bacillus anthracis (strain CDC 684 / NRRL 3495)</name>
    <dbReference type="NCBI Taxonomy" id="568206"/>
    <lineage>
        <taxon>Bacteria</taxon>
        <taxon>Bacillati</taxon>
        <taxon>Bacillota</taxon>
        <taxon>Bacilli</taxon>
        <taxon>Bacillales</taxon>
        <taxon>Bacillaceae</taxon>
        <taxon>Bacillus</taxon>
        <taxon>Bacillus cereus group</taxon>
    </lineage>
</organism>
<feature type="chain" id="PRO_1000193089" description="Dihydroorotase">
    <location>
        <begin position="1"/>
        <end position="428"/>
    </location>
</feature>
<feature type="active site" evidence="1">
    <location>
        <position position="304"/>
    </location>
</feature>
<feature type="binding site" evidence="1">
    <location>
        <position position="59"/>
    </location>
    <ligand>
        <name>Zn(2+)</name>
        <dbReference type="ChEBI" id="CHEBI:29105"/>
        <label>1</label>
    </ligand>
</feature>
<feature type="binding site" evidence="1">
    <location>
        <begin position="61"/>
        <end position="63"/>
    </location>
    <ligand>
        <name>substrate</name>
    </ligand>
</feature>
<feature type="binding site" evidence="1">
    <location>
        <position position="61"/>
    </location>
    <ligand>
        <name>Zn(2+)</name>
        <dbReference type="ChEBI" id="CHEBI:29105"/>
        <label>1</label>
    </ligand>
</feature>
<feature type="binding site" evidence="1">
    <location>
        <position position="93"/>
    </location>
    <ligand>
        <name>substrate</name>
    </ligand>
</feature>
<feature type="binding site" evidence="1">
    <location>
        <position position="151"/>
    </location>
    <ligand>
        <name>Zn(2+)</name>
        <dbReference type="ChEBI" id="CHEBI:29105"/>
        <label>1</label>
    </ligand>
</feature>
<feature type="binding site" evidence="1">
    <location>
        <position position="151"/>
    </location>
    <ligand>
        <name>Zn(2+)</name>
        <dbReference type="ChEBI" id="CHEBI:29105"/>
        <label>2</label>
    </ligand>
</feature>
<feature type="binding site" evidence="1">
    <location>
        <position position="178"/>
    </location>
    <ligand>
        <name>Zn(2+)</name>
        <dbReference type="ChEBI" id="CHEBI:29105"/>
        <label>2</label>
    </ligand>
</feature>
<feature type="binding site" evidence="1">
    <location>
        <position position="231"/>
    </location>
    <ligand>
        <name>Zn(2+)</name>
        <dbReference type="ChEBI" id="CHEBI:29105"/>
        <label>2</label>
    </ligand>
</feature>
<feature type="binding site" evidence="1">
    <location>
        <position position="277"/>
    </location>
    <ligand>
        <name>substrate</name>
    </ligand>
</feature>
<feature type="binding site" evidence="1">
    <location>
        <position position="304"/>
    </location>
    <ligand>
        <name>Zn(2+)</name>
        <dbReference type="ChEBI" id="CHEBI:29105"/>
        <label>1</label>
    </ligand>
</feature>
<feature type="binding site" evidence="1">
    <location>
        <position position="308"/>
    </location>
    <ligand>
        <name>substrate</name>
    </ligand>
</feature>
<feature type="binding site" evidence="1">
    <location>
        <begin position="322"/>
        <end position="323"/>
    </location>
    <ligand>
        <name>substrate</name>
    </ligand>
</feature>
<evidence type="ECO:0000255" key="1">
    <source>
        <dbReference type="HAMAP-Rule" id="MF_00220"/>
    </source>
</evidence>
<accession>C3L738</accession>
<sequence>MNYLFKNGRYMNEEGKIVATDLLVQDGKIAKVAENITADNAEVIDVNGKLIAPGLVDVHVHLREPGGEHKETIETGTLAAAKGGFTTICAMPNTRPVPDCREHMEDLQNRIKEKAHVNVLPYGAITVRQAGSEMTDFETLKELGAFAFTDDGVGVQDASMMLAAMKRAAKLNMAVVAHCEENTLINKGCVHEGKFSEKHGLNGIPSVCESVHIARDILLAEAADCHYHVCHVSTKGSVRVIRDAKRAGIKVTAEVTPHHLVLCEDDIPSADPNFKMNPPLRGKEDHEALIEGLLDGTIDMIATDHAPHTAEEKAQGIERAPFGITGFETAFPLLYTNLVKKGIITLEQLIQFLTEKPADTFGLEAGRLKEGRTADITIIDLEQEEEIDPTTFLSKGKNTPFAGWKCQGWPVMTIVGGKIAWQKESALV</sequence>
<dbReference type="EC" id="3.5.2.3" evidence="1"/>
<dbReference type="EMBL" id="CP001215">
    <property type="protein sequence ID" value="ACP13070.1"/>
    <property type="molecule type" value="Genomic_DNA"/>
</dbReference>
<dbReference type="RefSeq" id="WP_001108379.1">
    <property type="nucleotide sequence ID" value="NC_012581.1"/>
</dbReference>
<dbReference type="SMR" id="C3L738"/>
<dbReference type="GeneID" id="45023717"/>
<dbReference type="KEGG" id="bah:BAMEG_0604"/>
<dbReference type="HOGENOM" id="CLU_015572_1_0_9"/>
<dbReference type="UniPathway" id="UPA00070">
    <property type="reaction ID" value="UER00117"/>
</dbReference>
<dbReference type="GO" id="GO:0005737">
    <property type="term" value="C:cytoplasm"/>
    <property type="evidence" value="ECO:0007669"/>
    <property type="project" value="TreeGrafter"/>
</dbReference>
<dbReference type="GO" id="GO:0004038">
    <property type="term" value="F:allantoinase activity"/>
    <property type="evidence" value="ECO:0007669"/>
    <property type="project" value="TreeGrafter"/>
</dbReference>
<dbReference type="GO" id="GO:0004151">
    <property type="term" value="F:dihydroorotase activity"/>
    <property type="evidence" value="ECO:0007669"/>
    <property type="project" value="UniProtKB-UniRule"/>
</dbReference>
<dbReference type="GO" id="GO:0008270">
    <property type="term" value="F:zinc ion binding"/>
    <property type="evidence" value="ECO:0007669"/>
    <property type="project" value="UniProtKB-UniRule"/>
</dbReference>
<dbReference type="GO" id="GO:0044205">
    <property type="term" value="P:'de novo' UMP biosynthetic process"/>
    <property type="evidence" value="ECO:0007669"/>
    <property type="project" value="UniProtKB-UniRule"/>
</dbReference>
<dbReference type="GO" id="GO:0006145">
    <property type="term" value="P:purine nucleobase catabolic process"/>
    <property type="evidence" value="ECO:0007669"/>
    <property type="project" value="TreeGrafter"/>
</dbReference>
<dbReference type="CDD" id="cd01317">
    <property type="entry name" value="DHOase_IIa"/>
    <property type="match status" value="1"/>
</dbReference>
<dbReference type="FunFam" id="2.30.40.10:FF:000007">
    <property type="entry name" value="Dihydroorotase"/>
    <property type="match status" value="1"/>
</dbReference>
<dbReference type="FunFam" id="3.20.20.140:FF:000025">
    <property type="entry name" value="Dihydroorotase"/>
    <property type="match status" value="1"/>
</dbReference>
<dbReference type="Gene3D" id="3.20.20.140">
    <property type="entry name" value="Metal-dependent hydrolases"/>
    <property type="match status" value="1"/>
</dbReference>
<dbReference type="Gene3D" id="2.30.40.10">
    <property type="entry name" value="Urease, subunit C, domain 1"/>
    <property type="match status" value="2"/>
</dbReference>
<dbReference type="HAMAP" id="MF_00220_B">
    <property type="entry name" value="PyrC_classI_B"/>
    <property type="match status" value="1"/>
</dbReference>
<dbReference type="InterPro" id="IPR006680">
    <property type="entry name" value="Amidohydro-rel"/>
</dbReference>
<dbReference type="InterPro" id="IPR004722">
    <property type="entry name" value="DHOase"/>
</dbReference>
<dbReference type="InterPro" id="IPR050138">
    <property type="entry name" value="DHOase/Allantoinase_Hydrolase"/>
</dbReference>
<dbReference type="InterPro" id="IPR002195">
    <property type="entry name" value="Dihydroorotase_CS"/>
</dbReference>
<dbReference type="InterPro" id="IPR011059">
    <property type="entry name" value="Metal-dep_hydrolase_composite"/>
</dbReference>
<dbReference type="InterPro" id="IPR032466">
    <property type="entry name" value="Metal_Hydrolase"/>
</dbReference>
<dbReference type="NCBIfam" id="NF006837">
    <property type="entry name" value="PRK09357.1-2"/>
    <property type="match status" value="1"/>
</dbReference>
<dbReference type="NCBIfam" id="TIGR00857">
    <property type="entry name" value="pyrC_multi"/>
    <property type="match status" value="1"/>
</dbReference>
<dbReference type="PANTHER" id="PTHR43668">
    <property type="entry name" value="ALLANTOINASE"/>
    <property type="match status" value="1"/>
</dbReference>
<dbReference type="PANTHER" id="PTHR43668:SF2">
    <property type="entry name" value="ALLANTOINASE"/>
    <property type="match status" value="1"/>
</dbReference>
<dbReference type="Pfam" id="PF01979">
    <property type="entry name" value="Amidohydro_1"/>
    <property type="match status" value="1"/>
</dbReference>
<dbReference type="SUPFAM" id="SSF51338">
    <property type="entry name" value="Composite domain of metallo-dependent hydrolases"/>
    <property type="match status" value="1"/>
</dbReference>
<dbReference type="SUPFAM" id="SSF51556">
    <property type="entry name" value="Metallo-dependent hydrolases"/>
    <property type="match status" value="1"/>
</dbReference>
<dbReference type="PROSITE" id="PS00482">
    <property type="entry name" value="DIHYDROOROTASE_1"/>
    <property type="match status" value="1"/>
</dbReference>
<dbReference type="PROSITE" id="PS00483">
    <property type="entry name" value="DIHYDROOROTASE_2"/>
    <property type="match status" value="1"/>
</dbReference>
<gene>
    <name evidence="1" type="primary">pyrC</name>
    <name type="ordered locus">BAMEG_0604</name>
</gene>
<name>PYRC_BACAC</name>
<proteinExistence type="inferred from homology"/>
<comment type="function">
    <text evidence="1">Catalyzes the reversible cyclization of carbamoyl aspartate to dihydroorotate.</text>
</comment>
<comment type="catalytic activity">
    <reaction evidence="1">
        <text>(S)-dihydroorotate + H2O = N-carbamoyl-L-aspartate + H(+)</text>
        <dbReference type="Rhea" id="RHEA:24296"/>
        <dbReference type="ChEBI" id="CHEBI:15377"/>
        <dbReference type="ChEBI" id="CHEBI:15378"/>
        <dbReference type="ChEBI" id="CHEBI:30864"/>
        <dbReference type="ChEBI" id="CHEBI:32814"/>
        <dbReference type="EC" id="3.5.2.3"/>
    </reaction>
</comment>
<comment type="cofactor">
    <cofactor evidence="1">
        <name>Zn(2+)</name>
        <dbReference type="ChEBI" id="CHEBI:29105"/>
    </cofactor>
    <text evidence="1">Binds 2 Zn(2+) ions per subunit.</text>
</comment>
<comment type="pathway">
    <text evidence="1">Pyrimidine metabolism; UMP biosynthesis via de novo pathway; (S)-dihydroorotate from bicarbonate: step 3/3.</text>
</comment>
<comment type="similarity">
    <text evidence="1">Belongs to the metallo-dependent hydrolases superfamily. DHOase family. Class I DHOase subfamily.</text>
</comment>